<protein>
    <recommendedName>
        <fullName evidence="1">Iron-sulfur cluster insertion protein ErpA</fullName>
    </recommendedName>
</protein>
<comment type="function">
    <text evidence="1">Required for insertion of 4Fe-4S clusters for at least IspG.</text>
</comment>
<comment type="cofactor">
    <cofactor evidence="1">
        <name>iron-sulfur cluster</name>
        <dbReference type="ChEBI" id="CHEBI:30408"/>
    </cofactor>
    <text evidence="1">Binds 1 iron-sulfur cluster per subunit.</text>
</comment>
<comment type="subunit">
    <text evidence="1">Homodimer.</text>
</comment>
<comment type="similarity">
    <text evidence="1">Belongs to the HesB/IscA family.</text>
</comment>
<gene>
    <name evidence="1" type="primary">erpA</name>
    <name type="ordered locus">FTF0700</name>
</gene>
<dbReference type="EMBL" id="AM286280">
    <property type="protein sequence ID" value="CAL08716.1"/>
    <property type="molecule type" value="Genomic_DNA"/>
</dbReference>
<dbReference type="RefSeq" id="WP_003016875.1">
    <property type="nucleotide sequence ID" value="NC_008245.1"/>
</dbReference>
<dbReference type="SMR" id="Q14IC8"/>
<dbReference type="GeneID" id="75263905"/>
<dbReference type="KEGG" id="ftf:FTF0700"/>
<dbReference type="HOGENOM" id="CLU_069054_5_3_6"/>
<dbReference type="GO" id="GO:0051537">
    <property type="term" value="F:2 iron, 2 sulfur cluster binding"/>
    <property type="evidence" value="ECO:0007669"/>
    <property type="project" value="UniProtKB-ARBA"/>
</dbReference>
<dbReference type="GO" id="GO:0051539">
    <property type="term" value="F:4 iron, 4 sulfur cluster binding"/>
    <property type="evidence" value="ECO:0007669"/>
    <property type="project" value="TreeGrafter"/>
</dbReference>
<dbReference type="GO" id="GO:0005506">
    <property type="term" value="F:iron ion binding"/>
    <property type="evidence" value="ECO:0007669"/>
    <property type="project" value="UniProtKB-UniRule"/>
</dbReference>
<dbReference type="GO" id="GO:0016226">
    <property type="term" value="P:iron-sulfur cluster assembly"/>
    <property type="evidence" value="ECO:0007669"/>
    <property type="project" value="UniProtKB-UniRule"/>
</dbReference>
<dbReference type="FunFam" id="2.60.300.12:FF:000002">
    <property type="entry name" value="Iron-sulfur cluster insertion protein ErpA"/>
    <property type="match status" value="1"/>
</dbReference>
<dbReference type="Gene3D" id="2.60.300.12">
    <property type="entry name" value="HesB-like domain"/>
    <property type="match status" value="1"/>
</dbReference>
<dbReference type="HAMAP" id="MF_01380">
    <property type="entry name" value="Fe_S_insert_ErpA"/>
    <property type="match status" value="1"/>
</dbReference>
<dbReference type="InterPro" id="IPR000361">
    <property type="entry name" value="FeS_biogenesis"/>
</dbReference>
<dbReference type="InterPro" id="IPR016092">
    <property type="entry name" value="FeS_cluster_insertion"/>
</dbReference>
<dbReference type="InterPro" id="IPR017870">
    <property type="entry name" value="FeS_cluster_insertion_CS"/>
</dbReference>
<dbReference type="InterPro" id="IPR023063">
    <property type="entry name" value="FeS_cluster_insertion_RrpA"/>
</dbReference>
<dbReference type="InterPro" id="IPR035903">
    <property type="entry name" value="HesB-like_dom_sf"/>
</dbReference>
<dbReference type="NCBIfam" id="TIGR00049">
    <property type="entry name" value="iron-sulfur cluster assembly accessory protein"/>
    <property type="match status" value="1"/>
</dbReference>
<dbReference type="NCBIfam" id="NF010147">
    <property type="entry name" value="PRK13623.1"/>
    <property type="match status" value="1"/>
</dbReference>
<dbReference type="PANTHER" id="PTHR43011">
    <property type="entry name" value="IRON-SULFUR CLUSTER ASSEMBLY 2 HOMOLOG, MITOCHONDRIAL"/>
    <property type="match status" value="1"/>
</dbReference>
<dbReference type="PANTHER" id="PTHR43011:SF1">
    <property type="entry name" value="IRON-SULFUR CLUSTER ASSEMBLY 2 HOMOLOG, MITOCHONDRIAL"/>
    <property type="match status" value="1"/>
</dbReference>
<dbReference type="Pfam" id="PF01521">
    <property type="entry name" value="Fe-S_biosyn"/>
    <property type="match status" value="1"/>
</dbReference>
<dbReference type="SUPFAM" id="SSF89360">
    <property type="entry name" value="HesB-like domain"/>
    <property type="match status" value="1"/>
</dbReference>
<dbReference type="PROSITE" id="PS01152">
    <property type="entry name" value="HESB"/>
    <property type="match status" value="1"/>
</dbReference>
<feature type="chain" id="PRO_0000311486" description="Iron-sulfur cluster insertion protein ErpA">
    <location>
        <begin position="1"/>
        <end position="116"/>
    </location>
</feature>
<feature type="binding site" evidence="1">
    <location>
        <position position="44"/>
    </location>
    <ligand>
        <name>iron-sulfur cluster</name>
        <dbReference type="ChEBI" id="CHEBI:30408"/>
    </ligand>
</feature>
<feature type="binding site" evidence="1">
    <location>
        <position position="108"/>
    </location>
    <ligand>
        <name>iron-sulfur cluster</name>
        <dbReference type="ChEBI" id="CHEBI:30408"/>
    </ligand>
</feature>
<feature type="binding site" evidence="1">
    <location>
        <position position="110"/>
    </location>
    <ligand>
        <name>iron-sulfur cluster</name>
        <dbReference type="ChEBI" id="CHEBI:30408"/>
    </ligand>
</feature>
<name>ERPA_FRAT1</name>
<keyword id="KW-0408">Iron</keyword>
<keyword id="KW-0411">Iron-sulfur</keyword>
<keyword id="KW-0479">Metal-binding</keyword>
<accession>Q14IC8</accession>
<sequence length="116" mass="12658">MSEVVQSVDPINFTEAASLKVKELIEEEGDNSLSLRVYITGGGCSGFQYAFAFDNEVKEDDMVITKNGVRLLVDSMSFQYLVGADVDYKDDVEGAYFVIRNPNAKTTCGCGSSFSV</sequence>
<proteinExistence type="inferred from homology"/>
<organism>
    <name type="scientific">Francisella tularensis subsp. tularensis (strain FSC 198)</name>
    <dbReference type="NCBI Taxonomy" id="393115"/>
    <lineage>
        <taxon>Bacteria</taxon>
        <taxon>Pseudomonadati</taxon>
        <taxon>Pseudomonadota</taxon>
        <taxon>Gammaproteobacteria</taxon>
        <taxon>Thiotrichales</taxon>
        <taxon>Francisellaceae</taxon>
        <taxon>Francisella</taxon>
    </lineage>
</organism>
<reference key="1">
    <citation type="journal article" date="2007" name="PLoS ONE">
        <title>Genome sequencing shows that European isolates of Francisella tularensis subspecies tularensis are almost identical to US laboratory strain Schu S4.</title>
        <authorList>
            <person name="Chaudhuri R.R."/>
            <person name="Ren C.-P."/>
            <person name="Desmond L."/>
            <person name="Vincent G.A."/>
            <person name="Silman N.J."/>
            <person name="Brehm J.K."/>
            <person name="Elmore M.J."/>
            <person name="Hudson M.J."/>
            <person name="Forsman M."/>
            <person name="Isherwood K.E."/>
            <person name="Gurycova D."/>
            <person name="Minton N.P."/>
            <person name="Titball R.W."/>
            <person name="Pallen M.J."/>
            <person name="Vipond R."/>
        </authorList>
    </citation>
    <scope>NUCLEOTIDE SEQUENCE [LARGE SCALE GENOMIC DNA]</scope>
    <source>
        <strain>FSC 198</strain>
    </source>
</reference>
<evidence type="ECO:0000255" key="1">
    <source>
        <dbReference type="HAMAP-Rule" id="MF_01380"/>
    </source>
</evidence>